<name>XERC_SERMA</name>
<accession>O31087</accession>
<proteinExistence type="inferred from homology"/>
<reference key="1">
    <citation type="journal article" date="1998" name="J. Bacteriol.">
        <title>Nuclease overexpression mutants of Serratia marcescens.</title>
        <authorList>
            <person name="Guynn L.J."/>
            <person name="Dai W."/>
            <person name="Benedik M.J."/>
        </authorList>
    </citation>
    <scope>NUCLEOTIDE SEQUENCE [GENOMIC DNA]</scope>
    <scope>OVEREXPRESSION OF NUCA</scope>
    <scope>DISRUPTION PHENOTYPE</scope>
    <source>
        <strain>SM6</strain>
    </source>
</reference>
<gene>
    <name type="primary">xerC</name>
</gene>
<evidence type="ECO:0000250" key="1"/>
<evidence type="ECO:0000255" key="2">
    <source>
        <dbReference type="PROSITE-ProRule" id="PRU01246"/>
    </source>
</evidence>
<evidence type="ECO:0000255" key="3">
    <source>
        <dbReference type="PROSITE-ProRule" id="PRU01248"/>
    </source>
</evidence>
<evidence type="ECO:0000269" key="4">
    <source>
    </source>
</evidence>
<evidence type="ECO:0000305" key="5"/>
<protein>
    <recommendedName>
        <fullName>Tyrosine recombinase XerC</fullName>
    </recommendedName>
</protein>
<comment type="function">
    <text evidence="1">Site-specific tyrosine recombinase, which acts by catalyzing the cutting and rejoining of the recombining DNA molecules. Binds cooperatively to specific DNA consensus sequences that are separated from XerD binding sites by a short central region, forming the heterotetrameric XerC-XerD complex that recombines DNA substrates. The complex is essential to convert dimers of the bacterial chromosome into monomers to permit their segregation at cell division. It also contributes to the segregational stability of plasmids. In the complex XerC specifically exchanges the top DNA strands (By similarity).</text>
</comment>
<comment type="activity regulation">
    <text evidence="1">FtsK may regulate the catalytic switch between XerC and XerD in the heterotetrameric complex during the two steps of the recombination process.</text>
</comment>
<comment type="subunit">
    <text evidence="1">Forms a cyclic heterotetrameric complex composed of two molecules of XerC and two molecules of XerD, in which XerC interacts with XerD via its C-terminal region, XerD interacts with XerC via its C-terminal region and so on.</text>
</comment>
<comment type="subcellular location">
    <subcellularLocation>
        <location evidence="1">Cytoplasm</location>
    </subcellularLocation>
</comment>
<comment type="disruption phenotype">
    <text evidence="4">Defects result in partial SOS induction, inducing some overexpression of the nuclease NucA protein.</text>
</comment>
<comment type="similarity">
    <text evidence="5">Belongs to the 'phage' integrase family. XerC subfamily.</text>
</comment>
<keyword id="KW-0131">Cell cycle</keyword>
<keyword id="KW-0132">Cell division</keyword>
<keyword id="KW-0159">Chromosome partition</keyword>
<keyword id="KW-0963">Cytoplasm</keyword>
<keyword id="KW-0229">DNA integration</keyword>
<keyword id="KW-0233">DNA recombination</keyword>
<keyword id="KW-0238">DNA-binding</keyword>
<organism>
    <name type="scientific">Serratia marcescens</name>
    <dbReference type="NCBI Taxonomy" id="615"/>
    <lineage>
        <taxon>Bacteria</taxon>
        <taxon>Pseudomonadati</taxon>
        <taxon>Pseudomonadota</taxon>
        <taxon>Gammaproteobacteria</taxon>
        <taxon>Enterobacterales</taxon>
        <taxon>Yersiniaceae</taxon>
        <taxon>Serratia</taxon>
    </lineage>
</organism>
<feature type="chain" id="PRO_0000095326" description="Tyrosine recombinase XerC">
    <location>
        <begin position="1"/>
        <end position="303"/>
    </location>
</feature>
<feature type="domain" description="Core-binding (CB)" evidence="3">
    <location>
        <begin position="6"/>
        <end position="92"/>
    </location>
</feature>
<feature type="domain" description="Tyr recombinase" evidence="2">
    <location>
        <begin position="113"/>
        <end position="292"/>
    </location>
</feature>
<feature type="active site" evidence="2">
    <location>
        <position position="152"/>
    </location>
</feature>
<feature type="active site" evidence="2">
    <location>
        <position position="176"/>
    </location>
</feature>
<feature type="active site" evidence="2">
    <location>
        <position position="244"/>
    </location>
</feature>
<feature type="active site" evidence="2">
    <location>
        <position position="247"/>
    </location>
</feature>
<feature type="active site" evidence="2">
    <location>
        <position position="270"/>
    </location>
</feature>
<feature type="active site" description="O-(3'-phospho-DNA)-tyrosine intermediate" evidence="2">
    <location>
        <position position="279"/>
    </location>
</feature>
<dbReference type="EMBL" id="AF028736">
    <property type="protein sequence ID" value="AAC46276.1"/>
    <property type="molecule type" value="Genomic_DNA"/>
</dbReference>
<dbReference type="RefSeq" id="WP_033645020.1">
    <property type="nucleotide sequence ID" value="NZ_WUUW01000013.1"/>
</dbReference>
<dbReference type="SMR" id="O31087"/>
<dbReference type="STRING" id="273526.SMDB11_4288"/>
<dbReference type="GeneID" id="93694731"/>
<dbReference type="GO" id="GO:0005737">
    <property type="term" value="C:cytoplasm"/>
    <property type="evidence" value="ECO:0007669"/>
    <property type="project" value="UniProtKB-SubCell"/>
</dbReference>
<dbReference type="GO" id="GO:0003677">
    <property type="term" value="F:DNA binding"/>
    <property type="evidence" value="ECO:0007669"/>
    <property type="project" value="UniProtKB-KW"/>
</dbReference>
<dbReference type="GO" id="GO:0009037">
    <property type="term" value="F:tyrosine-based site-specific recombinase activity"/>
    <property type="evidence" value="ECO:0007669"/>
    <property type="project" value="UniProtKB-UniRule"/>
</dbReference>
<dbReference type="GO" id="GO:0051301">
    <property type="term" value="P:cell division"/>
    <property type="evidence" value="ECO:0007669"/>
    <property type="project" value="UniProtKB-KW"/>
</dbReference>
<dbReference type="GO" id="GO:0007059">
    <property type="term" value="P:chromosome segregation"/>
    <property type="evidence" value="ECO:0007669"/>
    <property type="project" value="UniProtKB-UniRule"/>
</dbReference>
<dbReference type="GO" id="GO:0006313">
    <property type="term" value="P:DNA transposition"/>
    <property type="evidence" value="ECO:0007669"/>
    <property type="project" value="UniProtKB-UniRule"/>
</dbReference>
<dbReference type="CDD" id="cd00798">
    <property type="entry name" value="INT_XerDC_C"/>
    <property type="match status" value="1"/>
</dbReference>
<dbReference type="FunFam" id="1.10.443.10:FF:000002">
    <property type="entry name" value="Tyrosine recombinase XerC"/>
    <property type="match status" value="1"/>
</dbReference>
<dbReference type="Gene3D" id="1.10.150.130">
    <property type="match status" value="1"/>
</dbReference>
<dbReference type="Gene3D" id="1.10.443.10">
    <property type="entry name" value="Intergrase catalytic core"/>
    <property type="match status" value="1"/>
</dbReference>
<dbReference type="HAMAP" id="MF_01808">
    <property type="entry name" value="Recomb_XerC_XerD"/>
    <property type="match status" value="1"/>
</dbReference>
<dbReference type="InterPro" id="IPR044068">
    <property type="entry name" value="CB"/>
</dbReference>
<dbReference type="InterPro" id="IPR011010">
    <property type="entry name" value="DNA_brk_join_enz"/>
</dbReference>
<dbReference type="InterPro" id="IPR013762">
    <property type="entry name" value="Integrase-like_cat_sf"/>
</dbReference>
<dbReference type="InterPro" id="IPR002104">
    <property type="entry name" value="Integrase_catalytic"/>
</dbReference>
<dbReference type="InterPro" id="IPR010998">
    <property type="entry name" value="Integrase_recombinase_N"/>
</dbReference>
<dbReference type="InterPro" id="IPR004107">
    <property type="entry name" value="Integrase_SAM-like_N"/>
</dbReference>
<dbReference type="InterPro" id="IPR011931">
    <property type="entry name" value="Recomb_XerC"/>
</dbReference>
<dbReference type="InterPro" id="IPR023009">
    <property type="entry name" value="Tyrosine_recombinase_XerC/XerD"/>
</dbReference>
<dbReference type="InterPro" id="IPR050090">
    <property type="entry name" value="Tyrosine_recombinase_XerCD"/>
</dbReference>
<dbReference type="NCBIfam" id="TIGR02224">
    <property type="entry name" value="recomb_XerC"/>
    <property type="match status" value="1"/>
</dbReference>
<dbReference type="PANTHER" id="PTHR30349">
    <property type="entry name" value="PHAGE INTEGRASE-RELATED"/>
    <property type="match status" value="1"/>
</dbReference>
<dbReference type="PANTHER" id="PTHR30349:SF81">
    <property type="entry name" value="TYROSINE RECOMBINASE XERC"/>
    <property type="match status" value="1"/>
</dbReference>
<dbReference type="Pfam" id="PF02899">
    <property type="entry name" value="Phage_int_SAM_1"/>
    <property type="match status" value="1"/>
</dbReference>
<dbReference type="Pfam" id="PF00589">
    <property type="entry name" value="Phage_integrase"/>
    <property type="match status" value="1"/>
</dbReference>
<dbReference type="SUPFAM" id="SSF56349">
    <property type="entry name" value="DNA breaking-rejoining enzymes"/>
    <property type="match status" value="1"/>
</dbReference>
<dbReference type="SUPFAM" id="SSF47823">
    <property type="entry name" value="lambda integrase-like, N-terminal domain"/>
    <property type="match status" value="1"/>
</dbReference>
<dbReference type="PROSITE" id="PS51900">
    <property type="entry name" value="CB"/>
    <property type="match status" value="1"/>
</dbReference>
<dbReference type="PROSITE" id="PS51898">
    <property type="entry name" value="TYR_RECOMBINASE"/>
    <property type="match status" value="1"/>
</dbReference>
<sequence length="303" mass="34115">MTPIAPSLQQPVDAFLRYLKVERQLSPLTQLSYSRQLTALMRLAQEIGVTDWTTLDAARVRMLAARSKRAGLQSASLALRLSSLRSFLDWLVSQGVLHANPAKGIRTPRSGRHLPKNIDVDEMNQLLEIDLNDPLAVRDRAMLEVMYGAGLRLSELVGLDCRHVDMAAGEVWVMGKGSKERKLPIGRTAVTWLEHWLAMRDLFGPQDDAMFLSNQGRRISTRNVQKRFAEWGVKQGVNSHIHPHKLRHSFATHMLESSGDLRAVQELLGHANLTTTQIYTHLDFQHLANVYDAAHPRAKRGKS</sequence>